<comment type="function">
    <text evidence="1">Catalyzes the reversible phosphorylation of UMP to UDP.</text>
</comment>
<comment type="catalytic activity">
    <reaction evidence="1">
        <text>UMP + ATP = UDP + ADP</text>
        <dbReference type="Rhea" id="RHEA:24400"/>
        <dbReference type="ChEBI" id="CHEBI:30616"/>
        <dbReference type="ChEBI" id="CHEBI:57865"/>
        <dbReference type="ChEBI" id="CHEBI:58223"/>
        <dbReference type="ChEBI" id="CHEBI:456216"/>
        <dbReference type="EC" id="2.7.4.22"/>
    </reaction>
</comment>
<comment type="activity regulation">
    <text evidence="1">Allosterically activated by GTP. Inhibited by UTP.</text>
</comment>
<comment type="pathway">
    <text evidence="1">Pyrimidine metabolism; CTP biosynthesis via de novo pathway; UDP from UMP (UMPK route): step 1/1.</text>
</comment>
<comment type="subunit">
    <text evidence="1">Homohexamer.</text>
</comment>
<comment type="subcellular location">
    <subcellularLocation>
        <location evidence="1">Cytoplasm</location>
    </subcellularLocation>
</comment>
<comment type="similarity">
    <text evidence="1">Belongs to the UMP kinase family.</text>
</comment>
<name>PYRH_STAHJ</name>
<keyword id="KW-0021">Allosteric enzyme</keyword>
<keyword id="KW-0067">ATP-binding</keyword>
<keyword id="KW-0963">Cytoplasm</keyword>
<keyword id="KW-0418">Kinase</keyword>
<keyword id="KW-0547">Nucleotide-binding</keyword>
<keyword id="KW-0665">Pyrimidine biosynthesis</keyword>
<keyword id="KW-0808">Transferase</keyword>
<dbReference type="EC" id="2.7.4.22" evidence="1"/>
<dbReference type="EMBL" id="AP006716">
    <property type="protein sequence ID" value="BAE04965.1"/>
    <property type="molecule type" value="Genomic_DNA"/>
</dbReference>
<dbReference type="RefSeq" id="WP_011275942.1">
    <property type="nucleotide sequence ID" value="NC_007168.1"/>
</dbReference>
<dbReference type="SMR" id="Q4L5W0"/>
<dbReference type="GeneID" id="93781034"/>
<dbReference type="KEGG" id="sha:SH1656"/>
<dbReference type="eggNOG" id="COG0528">
    <property type="taxonomic scope" value="Bacteria"/>
</dbReference>
<dbReference type="HOGENOM" id="CLU_033861_0_0_9"/>
<dbReference type="OrthoDB" id="9807458at2"/>
<dbReference type="UniPathway" id="UPA00159">
    <property type="reaction ID" value="UER00275"/>
</dbReference>
<dbReference type="Proteomes" id="UP000000543">
    <property type="component" value="Chromosome"/>
</dbReference>
<dbReference type="GO" id="GO:0005737">
    <property type="term" value="C:cytoplasm"/>
    <property type="evidence" value="ECO:0007669"/>
    <property type="project" value="UniProtKB-SubCell"/>
</dbReference>
<dbReference type="GO" id="GO:0005524">
    <property type="term" value="F:ATP binding"/>
    <property type="evidence" value="ECO:0007669"/>
    <property type="project" value="UniProtKB-KW"/>
</dbReference>
<dbReference type="GO" id="GO:0033862">
    <property type="term" value="F:UMP kinase activity"/>
    <property type="evidence" value="ECO:0007669"/>
    <property type="project" value="UniProtKB-EC"/>
</dbReference>
<dbReference type="GO" id="GO:0044210">
    <property type="term" value="P:'de novo' CTP biosynthetic process"/>
    <property type="evidence" value="ECO:0007669"/>
    <property type="project" value="UniProtKB-UniRule"/>
</dbReference>
<dbReference type="GO" id="GO:0006225">
    <property type="term" value="P:UDP biosynthetic process"/>
    <property type="evidence" value="ECO:0007669"/>
    <property type="project" value="TreeGrafter"/>
</dbReference>
<dbReference type="CDD" id="cd04254">
    <property type="entry name" value="AAK_UMPK-PyrH-Ec"/>
    <property type="match status" value="1"/>
</dbReference>
<dbReference type="FunFam" id="3.40.1160.10:FF:000001">
    <property type="entry name" value="Uridylate kinase"/>
    <property type="match status" value="1"/>
</dbReference>
<dbReference type="Gene3D" id="3.40.1160.10">
    <property type="entry name" value="Acetylglutamate kinase-like"/>
    <property type="match status" value="1"/>
</dbReference>
<dbReference type="HAMAP" id="MF_01220_B">
    <property type="entry name" value="PyrH_B"/>
    <property type="match status" value="1"/>
</dbReference>
<dbReference type="InterPro" id="IPR036393">
    <property type="entry name" value="AceGlu_kinase-like_sf"/>
</dbReference>
<dbReference type="InterPro" id="IPR001048">
    <property type="entry name" value="Asp/Glu/Uridylate_kinase"/>
</dbReference>
<dbReference type="InterPro" id="IPR011817">
    <property type="entry name" value="Uridylate_kinase"/>
</dbReference>
<dbReference type="InterPro" id="IPR015963">
    <property type="entry name" value="Uridylate_kinase_bac"/>
</dbReference>
<dbReference type="NCBIfam" id="TIGR02075">
    <property type="entry name" value="pyrH_bact"/>
    <property type="match status" value="1"/>
</dbReference>
<dbReference type="PANTHER" id="PTHR42833">
    <property type="entry name" value="URIDYLATE KINASE"/>
    <property type="match status" value="1"/>
</dbReference>
<dbReference type="PANTHER" id="PTHR42833:SF4">
    <property type="entry name" value="URIDYLATE KINASE PUMPKIN, CHLOROPLASTIC"/>
    <property type="match status" value="1"/>
</dbReference>
<dbReference type="Pfam" id="PF00696">
    <property type="entry name" value="AA_kinase"/>
    <property type="match status" value="1"/>
</dbReference>
<dbReference type="PIRSF" id="PIRSF005650">
    <property type="entry name" value="Uridylate_kin"/>
    <property type="match status" value="1"/>
</dbReference>
<dbReference type="SUPFAM" id="SSF53633">
    <property type="entry name" value="Carbamate kinase-like"/>
    <property type="match status" value="1"/>
</dbReference>
<gene>
    <name evidence="1" type="primary">pyrH</name>
    <name type="ordered locus">SH1656</name>
</gene>
<evidence type="ECO:0000255" key="1">
    <source>
        <dbReference type="HAMAP-Rule" id="MF_01220"/>
    </source>
</evidence>
<reference key="1">
    <citation type="journal article" date="2005" name="J. Bacteriol.">
        <title>Whole-genome sequencing of Staphylococcus haemolyticus uncovers the extreme plasticity of its genome and the evolution of human-colonizing staphylococcal species.</title>
        <authorList>
            <person name="Takeuchi F."/>
            <person name="Watanabe S."/>
            <person name="Baba T."/>
            <person name="Yuzawa H."/>
            <person name="Ito T."/>
            <person name="Morimoto Y."/>
            <person name="Kuroda M."/>
            <person name="Cui L."/>
            <person name="Takahashi M."/>
            <person name="Ankai A."/>
            <person name="Baba S."/>
            <person name="Fukui S."/>
            <person name="Lee J.C."/>
            <person name="Hiramatsu K."/>
        </authorList>
    </citation>
    <scope>NUCLEOTIDE SEQUENCE [LARGE SCALE GENOMIC DNA]</scope>
    <source>
        <strain>JCSC1435</strain>
    </source>
</reference>
<proteinExistence type="inferred from homology"/>
<protein>
    <recommendedName>
        <fullName evidence="1">Uridylate kinase</fullName>
        <shortName evidence="1">UK</shortName>
        <ecNumber evidence="1">2.7.4.22</ecNumber>
    </recommendedName>
    <alternativeName>
        <fullName evidence="1">Uridine monophosphate kinase</fullName>
        <shortName evidence="1">UMP kinase</shortName>
        <shortName evidence="1">UMPK</shortName>
    </alternativeName>
</protein>
<feature type="chain" id="PRO_0000143889" description="Uridylate kinase">
    <location>
        <begin position="1"/>
        <end position="240"/>
    </location>
</feature>
<feature type="region of interest" description="Involved in allosteric activation by GTP" evidence="1">
    <location>
        <begin position="21"/>
        <end position="26"/>
    </location>
</feature>
<feature type="binding site" evidence="1">
    <location>
        <begin position="13"/>
        <end position="16"/>
    </location>
    <ligand>
        <name>ATP</name>
        <dbReference type="ChEBI" id="CHEBI:30616"/>
    </ligand>
</feature>
<feature type="binding site" evidence="1">
    <location>
        <position position="55"/>
    </location>
    <ligand>
        <name>UMP</name>
        <dbReference type="ChEBI" id="CHEBI:57865"/>
    </ligand>
</feature>
<feature type="binding site" evidence="1">
    <location>
        <position position="56"/>
    </location>
    <ligand>
        <name>ATP</name>
        <dbReference type="ChEBI" id="CHEBI:30616"/>
    </ligand>
</feature>
<feature type="binding site" evidence="1">
    <location>
        <position position="60"/>
    </location>
    <ligand>
        <name>ATP</name>
        <dbReference type="ChEBI" id="CHEBI:30616"/>
    </ligand>
</feature>
<feature type="binding site" evidence="1">
    <location>
        <position position="75"/>
    </location>
    <ligand>
        <name>UMP</name>
        <dbReference type="ChEBI" id="CHEBI:57865"/>
    </ligand>
</feature>
<feature type="binding site" evidence="1">
    <location>
        <begin position="136"/>
        <end position="143"/>
    </location>
    <ligand>
        <name>UMP</name>
        <dbReference type="ChEBI" id="CHEBI:57865"/>
    </ligand>
</feature>
<feature type="binding site" evidence="1">
    <location>
        <position position="164"/>
    </location>
    <ligand>
        <name>ATP</name>
        <dbReference type="ChEBI" id="CHEBI:30616"/>
    </ligand>
</feature>
<feature type="binding site" evidence="1">
    <location>
        <position position="170"/>
    </location>
    <ligand>
        <name>ATP</name>
        <dbReference type="ChEBI" id="CHEBI:30616"/>
    </ligand>
</feature>
<feature type="binding site" evidence="1">
    <location>
        <position position="173"/>
    </location>
    <ligand>
        <name>ATP</name>
        <dbReference type="ChEBI" id="CHEBI:30616"/>
    </ligand>
</feature>
<organism>
    <name type="scientific">Staphylococcus haemolyticus (strain JCSC1435)</name>
    <dbReference type="NCBI Taxonomy" id="279808"/>
    <lineage>
        <taxon>Bacteria</taxon>
        <taxon>Bacillati</taxon>
        <taxon>Bacillota</taxon>
        <taxon>Bacilli</taxon>
        <taxon>Bacillales</taxon>
        <taxon>Staphylococcaceae</taxon>
        <taxon>Staphylococcus</taxon>
    </lineage>
</organism>
<sequence>MAQTSKYKRVVLKLSGEALAGDKGFGINPIIIKSVAQQVAEVAKMDCEIAVIVGGGNIWRGKTGSDLGMDRGTADYMGMLATVMNALALQDSLEQLECDTRVLTSIEMKQVAEPYIRRRAIRHLEKKRVVIFAAGIGNPYFSTDTTAALRAAEVEADVILMGKNNVDGVYSADPKVDKNAVKYEHLTHIQMLQEGLQVMDSTASSFCMDNNIPLNVFSIMEEGNIKRAVMGEKIGTLITK</sequence>
<accession>Q4L5W0</accession>